<dbReference type="EMBL" id="AE004092">
    <property type="protein sequence ID" value="AAK33504.1"/>
    <property type="molecule type" value="Genomic_DNA"/>
</dbReference>
<dbReference type="EMBL" id="CP000017">
    <property type="protein sequence ID" value="AAZ51033.1"/>
    <property type="molecule type" value="Genomic_DNA"/>
</dbReference>
<dbReference type="RefSeq" id="NP_268783.1">
    <property type="nucleotide sequence ID" value="NC_002737.2"/>
</dbReference>
<dbReference type="SMR" id="Q9A126"/>
<dbReference type="PaxDb" id="1314-HKU360_00438"/>
<dbReference type="KEGG" id="spy:SPy_0504"/>
<dbReference type="KEGG" id="spz:M5005_Spy0415"/>
<dbReference type="PATRIC" id="fig|160490.10.peg.430"/>
<dbReference type="HOGENOM" id="CLU_108953_0_0_9"/>
<dbReference type="OMA" id="WTNHSAR"/>
<dbReference type="Proteomes" id="UP000000750">
    <property type="component" value="Chromosome"/>
</dbReference>
<dbReference type="GO" id="GO:0005829">
    <property type="term" value="C:cytosol"/>
    <property type="evidence" value="ECO:0007669"/>
    <property type="project" value="TreeGrafter"/>
</dbReference>
<dbReference type="GO" id="GO:0003723">
    <property type="term" value="F:RNA binding"/>
    <property type="evidence" value="ECO:0007669"/>
    <property type="project" value="UniProtKB-UniRule"/>
</dbReference>
<dbReference type="GO" id="GO:0070929">
    <property type="term" value="P:trans-translation"/>
    <property type="evidence" value="ECO:0007669"/>
    <property type="project" value="UniProtKB-UniRule"/>
</dbReference>
<dbReference type="CDD" id="cd09294">
    <property type="entry name" value="SmpB"/>
    <property type="match status" value="1"/>
</dbReference>
<dbReference type="Gene3D" id="2.40.280.10">
    <property type="match status" value="1"/>
</dbReference>
<dbReference type="HAMAP" id="MF_00023">
    <property type="entry name" value="SmpB"/>
    <property type="match status" value="1"/>
</dbReference>
<dbReference type="InterPro" id="IPR023620">
    <property type="entry name" value="SmpB"/>
</dbReference>
<dbReference type="InterPro" id="IPR000037">
    <property type="entry name" value="SsrA-bd_prot"/>
</dbReference>
<dbReference type="InterPro" id="IPR020081">
    <property type="entry name" value="SsrA-bd_prot_CS"/>
</dbReference>
<dbReference type="NCBIfam" id="NF003843">
    <property type="entry name" value="PRK05422.1"/>
    <property type="match status" value="1"/>
</dbReference>
<dbReference type="NCBIfam" id="TIGR00086">
    <property type="entry name" value="smpB"/>
    <property type="match status" value="1"/>
</dbReference>
<dbReference type="PANTHER" id="PTHR30308:SF2">
    <property type="entry name" value="SSRA-BINDING PROTEIN"/>
    <property type="match status" value="1"/>
</dbReference>
<dbReference type="PANTHER" id="PTHR30308">
    <property type="entry name" value="TMRNA-BINDING COMPONENT OF TRANS-TRANSLATION TAGGING COMPLEX"/>
    <property type="match status" value="1"/>
</dbReference>
<dbReference type="Pfam" id="PF01668">
    <property type="entry name" value="SmpB"/>
    <property type="match status" value="1"/>
</dbReference>
<dbReference type="SUPFAM" id="SSF74982">
    <property type="entry name" value="Small protein B (SmpB)"/>
    <property type="match status" value="1"/>
</dbReference>
<dbReference type="PROSITE" id="PS01317">
    <property type="entry name" value="SSRP"/>
    <property type="match status" value="1"/>
</dbReference>
<sequence>MAKGEGHILAQNKKARHDYHIVETVEAGIVLTGTEIKSVRAARIQLKDGFAQIKNGEAWLVNVHIAPFEQGNIWNADPERTRKLLLKKREITHLANELKGSGMTLVPLKVYLKDGFAKVLIGLAKGKHEYDKRETIKRRDQERDIKKQMKHYNAR</sequence>
<organism>
    <name type="scientific">Streptococcus pyogenes serotype M1</name>
    <dbReference type="NCBI Taxonomy" id="301447"/>
    <lineage>
        <taxon>Bacteria</taxon>
        <taxon>Bacillati</taxon>
        <taxon>Bacillota</taxon>
        <taxon>Bacilli</taxon>
        <taxon>Lactobacillales</taxon>
        <taxon>Streptococcaceae</taxon>
        <taxon>Streptococcus</taxon>
    </lineage>
</organism>
<name>SSRP_STRP1</name>
<protein>
    <recommendedName>
        <fullName evidence="1">SsrA-binding protein</fullName>
    </recommendedName>
    <alternativeName>
        <fullName evidence="1">Small protein B</fullName>
    </alternativeName>
</protein>
<gene>
    <name evidence="1" type="primary">smpB</name>
    <name type="ordered locus">SPy_0504</name>
    <name type="ordered locus">M5005_Spy0415</name>
</gene>
<proteinExistence type="inferred from homology"/>
<reference key="1">
    <citation type="journal article" date="2001" name="Proc. Natl. Acad. Sci. U.S.A.">
        <title>Complete genome sequence of an M1 strain of Streptococcus pyogenes.</title>
        <authorList>
            <person name="Ferretti J.J."/>
            <person name="McShan W.M."/>
            <person name="Ajdic D.J."/>
            <person name="Savic D.J."/>
            <person name="Savic G."/>
            <person name="Lyon K."/>
            <person name="Primeaux C."/>
            <person name="Sezate S."/>
            <person name="Suvorov A.N."/>
            <person name="Kenton S."/>
            <person name="Lai H.S."/>
            <person name="Lin S.P."/>
            <person name="Qian Y."/>
            <person name="Jia H.G."/>
            <person name="Najar F.Z."/>
            <person name="Ren Q."/>
            <person name="Zhu H."/>
            <person name="Song L."/>
            <person name="White J."/>
            <person name="Yuan X."/>
            <person name="Clifton S.W."/>
            <person name="Roe B.A."/>
            <person name="McLaughlin R.E."/>
        </authorList>
    </citation>
    <scope>NUCLEOTIDE SEQUENCE [LARGE SCALE GENOMIC DNA]</scope>
    <source>
        <strain>ATCC 700294 / SF370 / Serotype M1</strain>
    </source>
</reference>
<reference key="2">
    <citation type="journal article" date="2005" name="J. Infect. Dis.">
        <title>Evolutionary origin and emergence of a highly successful clone of serotype M1 group A Streptococcus involved multiple horizontal gene transfer events.</title>
        <authorList>
            <person name="Sumby P."/>
            <person name="Porcella S.F."/>
            <person name="Madrigal A.G."/>
            <person name="Barbian K.D."/>
            <person name="Virtaneva K."/>
            <person name="Ricklefs S.M."/>
            <person name="Sturdevant D.E."/>
            <person name="Graham M.R."/>
            <person name="Vuopio-Varkila J."/>
            <person name="Hoe N.P."/>
            <person name="Musser J.M."/>
        </authorList>
    </citation>
    <scope>NUCLEOTIDE SEQUENCE [LARGE SCALE GENOMIC DNA]</scope>
    <source>
        <strain>ATCC BAA-947 / MGAS5005 / Serotype M1</strain>
    </source>
</reference>
<accession>Q9A126</accession>
<accession>Q490D5</accession>
<keyword id="KW-0963">Cytoplasm</keyword>
<keyword id="KW-1185">Reference proteome</keyword>
<keyword id="KW-0694">RNA-binding</keyword>
<comment type="function">
    <text evidence="1">Required for rescue of stalled ribosomes mediated by trans-translation. Binds to transfer-messenger RNA (tmRNA), required for stable association of tmRNA with ribosomes. tmRNA and SmpB together mimic tRNA shape, replacing the anticodon stem-loop with SmpB. tmRNA is encoded by the ssrA gene; the 2 termini fold to resemble tRNA(Ala) and it encodes a 'tag peptide', a short internal open reading frame. During trans-translation Ala-aminoacylated tmRNA acts like a tRNA, entering the A-site of stalled ribosomes, displacing the stalled mRNA. The ribosome then switches to translate the ORF on the tmRNA; the nascent peptide is terminated with the 'tag peptide' encoded by the tmRNA and targeted for degradation. The ribosome is freed to recommence translation, which seems to be the essential function of trans-translation.</text>
</comment>
<comment type="subcellular location">
    <subcellularLocation>
        <location evidence="1">Cytoplasm</location>
    </subcellularLocation>
    <text evidence="1">The tmRNA-SmpB complex associates with stalled 70S ribosomes.</text>
</comment>
<comment type="similarity">
    <text evidence="1">Belongs to the SmpB family.</text>
</comment>
<evidence type="ECO:0000255" key="1">
    <source>
        <dbReference type="HAMAP-Rule" id="MF_00023"/>
    </source>
</evidence>
<evidence type="ECO:0000256" key="2">
    <source>
        <dbReference type="SAM" id="MobiDB-lite"/>
    </source>
</evidence>
<feature type="chain" id="PRO_0000103043" description="SsrA-binding protein">
    <location>
        <begin position="1"/>
        <end position="155"/>
    </location>
</feature>
<feature type="region of interest" description="Disordered" evidence="2">
    <location>
        <begin position="135"/>
        <end position="155"/>
    </location>
</feature>
<feature type="compositionally biased region" description="Basic and acidic residues" evidence="2">
    <location>
        <begin position="135"/>
        <end position="147"/>
    </location>
</feature>